<dbReference type="EC" id="2.1.2.11" evidence="1"/>
<dbReference type="EMBL" id="AE017223">
    <property type="protein sequence ID" value="AAX73755.1"/>
    <property type="molecule type" value="Genomic_DNA"/>
</dbReference>
<dbReference type="RefSeq" id="WP_002963495.1">
    <property type="nucleotide sequence ID" value="NC_006932.1"/>
</dbReference>
<dbReference type="SMR" id="Q57F29"/>
<dbReference type="EnsemblBacteria" id="AAX73755">
    <property type="protein sequence ID" value="AAX73755"/>
    <property type="gene ID" value="BruAb1_0356"/>
</dbReference>
<dbReference type="GeneID" id="97534281"/>
<dbReference type="KEGG" id="bmb:BruAb1_0356"/>
<dbReference type="HOGENOM" id="CLU_036645_1_0_5"/>
<dbReference type="UniPathway" id="UPA00028">
    <property type="reaction ID" value="UER00003"/>
</dbReference>
<dbReference type="Proteomes" id="UP000000540">
    <property type="component" value="Chromosome I"/>
</dbReference>
<dbReference type="GO" id="GO:0005737">
    <property type="term" value="C:cytoplasm"/>
    <property type="evidence" value="ECO:0007669"/>
    <property type="project" value="UniProtKB-SubCell"/>
</dbReference>
<dbReference type="GO" id="GO:0003864">
    <property type="term" value="F:3-methyl-2-oxobutanoate hydroxymethyltransferase activity"/>
    <property type="evidence" value="ECO:0007669"/>
    <property type="project" value="UniProtKB-UniRule"/>
</dbReference>
<dbReference type="GO" id="GO:0000287">
    <property type="term" value="F:magnesium ion binding"/>
    <property type="evidence" value="ECO:0007669"/>
    <property type="project" value="TreeGrafter"/>
</dbReference>
<dbReference type="GO" id="GO:0015940">
    <property type="term" value="P:pantothenate biosynthetic process"/>
    <property type="evidence" value="ECO:0007669"/>
    <property type="project" value="UniProtKB-UniRule"/>
</dbReference>
<dbReference type="CDD" id="cd06557">
    <property type="entry name" value="KPHMT-like"/>
    <property type="match status" value="1"/>
</dbReference>
<dbReference type="FunFam" id="3.20.20.60:FF:000003">
    <property type="entry name" value="3-methyl-2-oxobutanoate hydroxymethyltransferase"/>
    <property type="match status" value="1"/>
</dbReference>
<dbReference type="Gene3D" id="3.20.20.60">
    <property type="entry name" value="Phosphoenolpyruvate-binding domains"/>
    <property type="match status" value="1"/>
</dbReference>
<dbReference type="HAMAP" id="MF_00156">
    <property type="entry name" value="PanB"/>
    <property type="match status" value="1"/>
</dbReference>
<dbReference type="InterPro" id="IPR003700">
    <property type="entry name" value="Pantoate_hydroxy_MeTrfase"/>
</dbReference>
<dbReference type="InterPro" id="IPR015813">
    <property type="entry name" value="Pyrv/PenolPyrv_kinase-like_dom"/>
</dbReference>
<dbReference type="InterPro" id="IPR040442">
    <property type="entry name" value="Pyrv_kinase-like_dom_sf"/>
</dbReference>
<dbReference type="NCBIfam" id="TIGR00222">
    <property type="entry name" value="panB"/>
    <property type="match status" value="1"/>
</dbReference>
<dbReference type="NCBIfam" id="NF001452">
    <property type="entry name" value="PRK00311.1"/>
    <property type="match status" value="1"/>
</dbReference>
<dbReference type="PANTHER" id="PTHR20881">
    <property type="entry name" value="3-METHYL-2-OXOBUTANOATE HYDROXYMETHYLTRANSFERASE"/>
    <property type="match status" value="1"/>
</dbReference>
<dbReference type="PANTHER" id="PTHR20881:SF0">
    <property type="entry name" value="3-METHYL-2-OXOBUTANOATE HYDROXYMETHYLTRANSFERASE"/>
    <property type="match status" value="1"/>
</dbReference>
<dbReference type="Pfam" id="PF02548">
    <property type="entry name" value="Pantoate_transf"/>
    <property type="match status" value="1"/>
</dbReference>
<dbReference type="PIRSF" id="PIRSF000388">
    <property type="entry name" value="Pantoate_hydroxy_MeTrfase"/>
    <property type="match status" value="1"/>
</dbReference>
<dbReference type="SUPFAM" id="SSF51621">
    <property type="entry name" value="Phosphoenolpyruvate/pyruvate domain"/>
    <property type="match status" value="1"/>
</dbReference>
<name>PANB_BRUAB</name>
<sequence length="275" mass="29418">MSAPVTRKRLTPKVIQAMKGECPIVSLTAYTTPVARLLDPHCDLLLVGDSLGMVLYGMESTLAVTLDMMIMHGQAVMRGTSHACVIVDMPFGSYQESKEQAFRNAARVMQETGCDGVKLEGGEEMAETVAFLVRRGIPVFGHVGLMPQQVNTVGGFRSLGRGDDEAGKIRRDAQAIAQAGAFAVVIEGTVEPLAREITALIDIPTVGIGASSACDGQVLVSDDMLGLFQDFTPRFVKRFAHLAPQVSQAAEAYAEEVRARRFPGPEHVFGAKPGA</sequence>
<gene>
    <name evidence="1" type="primary">panB</name>
    <name type="ordered locus">BruAb1_0356</name>
</gene>
<accession>Q57F29</accession>
<reference key="1">
    <citation type="journal article" date="2005" name="J. Bacteriol.">
        <title>Completion of the genome sequence of Brucella abortus and comparison to the highly similar genomes of Brucella melitensis and Brucella suis.</title>
        <authorList>
            <person name="Halling S.M."/>
            <person name="Peterson-Burch B.D."/>
            <person name="Bricker B.J."/>
            <person name="Zuerner R.L."/>
            <person name="Qing Z."/>
            <person name="Li L.-L."/>
            <person name="Kapur V."/>
            <person name="Alt D.P."/>
            <person name="Olsen S.C."/>
        </authorList>
    </citation>
    <scope>NUCLEOTIDE SEQUENCE [LARGE SCALE GENOMIC DNA]</scope>
    <source>
        <strain>9-941</strain>
    </source>
</reference>
<feature type="chain" id="PRO_0000297226" description="3-methyl-2-oxobutanoate hydroxymethyltransferase">
    <location>
        <begin position="1"/>
        <end position="275"/>
    </location>
</feature>
<feature type="active site" description="Proton acceptor" evidence="1">
    <location>
        <position position="187"/>
    </location>
</feature>
<feature type="binding site" evidence="1">
    <location>
        <begin position="49"/>
        <end position="50"/>
    </location>
    <ligand>
        <name>3-methyl-2-oxobutanoate</name>
        <dbReference type="ChEBI" id="CHEBI:11851"/>
    </ligand>
</feature>
<feature type="binding site" evidence="1">
    <location>
        <position position="49"/>
    </location>
    <ligand>
        <name>Mg(2+)</name>
        <dbReference type="ChEBI" id="CHEBI:18420"/>
    </ligand>
</feature>
<feature type="binding site" evidence="1">
    <location>
        <position position="88"/>
    </location>
    <ligand>
        <name>3-methyl-2-oxobutanoate</name>
        <dbReference type="ChEBI" id="CHEBI:11851"/>
    </ligand>
</feature>
<feature type="binding site" evidence="1">
    <location>
        <position position="88"/>
    </location>
    <ligand>
        <name>Mg(2+)</name>
        <dbReference type="ChEBI" id="CHEBI:18420"/>
    </ligand>
</feature>
<feature type="binding site" evidence="1">
    <location>
        <position position="118"/>
    </location>
    <ligand>
        <name>3-methyl-2-oxobutanoate</name>
        <dbReference type="ChEBI" id="CHEBI:11851"/>
    </ligand>
</feature>
<feature type="binding site" evidence="1">
    <location>
        <position position="120"/>
    </location>
    <ligand>
        <name>Mg(2+)</name>
        <dbReference type="ChEBI" id="CHEBI:18420"/>
    </ligand>
</feature>
<comment type="function">
    <text evidence="1">Catalyzes the reversible reaction in which hydroxymethyl group from 5,10-methylenetetrahydrofolate is transferred onto alpha-ketoisovalerate to form ketopantoate.</text>
</comment>
<comment type="catalytic activity">
    <reaction evidence="1">
        <text>3-methyl-2-oxobutanoate + (6R)-5,10-methylene-5,6,7,8-tetrahydrofolate + H2O = 2-dehydropantoate + (6S)-5,6,7,8-tetrahydrofolate</text>
        <dbReference type="Rhea" id="RHEA:11824"/>
        <dbReference type="ChEBI" id="CHEBI:11561"/>
        <dbReference type="ChEBI" id="CHEBI:11851"/>
        <dbReference type="ChEBI" id="CHEBI:15377"/>
        <dbReference type="ChEBI" id="CHEBI:15636"/>
        <dbReference type="ChEBI" id="CHEBI:57453"/>
        <dbReference type="EC" id="2.1.2.11"/>
    </reaction>
</comment>
<comment type="cofactor">
    <cofactor evidence="1">
        <name>Mg(2+)</name>
        <dbReference type="ChEBI" id="CHEBI:18420"/>
    </cofactor>
    <text evidence="1">Binds 1 Mg(2+) ion per subunit.</text>
</comment>
<comment type="pathway">
    <text evidence="1">Cofactor biosynthesis; (R)-pantothenate biosynthesis; (R)-pantoate from 3-methyl-2-oxobutanoate: step 1/2.</text>
</comment>
<comment type="subunit">
    <text evidence="1">Homodecamer; pentamer of dimers.</text>
</comment>
<comment type="subcellular location">
    <subcellularLocation>
        <location evidence="1">Cytoplasm</location>
    </subcellularLocation>
</comment>
<comment type="similarity">
    <text evidence="1">Belongs to the PanB family.</text>
</comment>
<evidence type="ECO:0000255" key="1">
    <source>
        <dbReference type="HAMAP-Rule" id="MF_00156"/>
    </source>
</evidence>
<organism>
    <name type="scientific">Brucella abortus biovar 1 (strain 9-941)</name>
    <dbReference type="NCBI Taxonomy" id="262698"/>
    <lineage>
        <taxon>Bacteria</taxon>
        <taxon>Pseudomonadati</taxon>
        <taxon>Pseudomonadota</taxon>
        <taxon>Alphaproteobacteria</taxon>
        <taxon>Hyphomicrobiales</taxon>
        <taxon>Brucellaceae</taxon>
        <taxon>Brucella/Ochrobactrum group</taxon>
        <taxon>Brucella</taxon>
    </lineage>
</organism>
<protein>
    <recommendedName>
        <fullName evidence="1">3-methyl-2-oxobutanoate hydroxymethyltransferase</fullName>
        <ecNumber evidence="1">2.1.2.11</ecNumber>
    </recommendedName>
    <alternativeName>
        <fullName evidence="1">Ketopantoate hydroxymethyltransferase</fullName>
        <shortName evidence="1">KPHMT</shortName>
    </alternativeName>
</protein>
<keyword id="KW-0963">Cytoplasm</keyword>
<keyword id="KW-0460">Magnesium</keyword>
<keyword id="KW-0479">Metal-binding</keyword>
<keyword id="KW-0566">Pantothenate biosynthesis</keyword>
<keyword id="KW-0808">Transferase</keyword>
<proteinExistence type="inferred from homology"/>